<name>RIMK_PSET1</name>
<protein>
    <recommendedName>
        <fullName evidence="1">Probable alpha-L-glutamate ligase</fullName>
        <ecNumber evidence="1">6.3.2.-</ecNumber>
    </recommendedName>
</protein>
<accession>Q3IG57</accession>
<proteinExistence type="inferred from homology"/>
<keyword id="KW-0067">ATP-binding</keyword>
<keyword id="KW-0436">Ligase</keyword>
<keyword id="KW-0460">Magnesium</keyword>
<keyword id="KW-0464">Manganese</keyword>
<keyword id="KW-0479">Metal-binding</keyword>
<keyword id="KW-0547">Nucleotide-binding</keyword>
<keyword id="KW-0648">Protein biosynthesis</keyword>
<keyword id="KW-1185">Reference proteome</keyword>
<evidence type="ECO:0000255" key="1">
    <source>
        <dbReference type="HAMAP-Rule" id="MF_01552"/>
    </source>
</evidence>
<reference key="1">
    <citation type="journal article" date="2005" name="Genome Res.">
        <title>Coping with cold: the genome of the versatile marine Antarctica bacterium Pseudoalteromonas haloplanktis TAC125.</title>
        <authorList>
            <person name="Medigue C."/>
            <person name="Krin E."/>
            <person name="Pascal G."/>
            <person name="Barbe V."/>
            <person name="Bernsel A."/>
            <person name="Bertin P.N."/>
            <person name="Cheung F."/>
            <person name="Cruveiller S."/>
            <person name="D'Amico S."/>
            <person name="Duilio A."/>
            <person name="Fang G."/>
            <person name="Feller G."/>
            <person name="Ho C."/>
            <person name="Mangenot S."/>
            <person name="Marino G."/>
            <person name="Nilsson J."/>
            <person name="Parrilli E."/>
            <person name="Rocha E.P.C."/>
            <person name="Rouy Z."/>
            <person name="Sekowska A."/>
            <person name="Tutino M.L."/>
            <person name="Vallenet D."/>
            <person name="von Heijne G."/>
            <person name="Danchin A."/>
        </authorList>
    </citation>
    <scope>NUCLEOTIDE SEQUENCE [LARGE SCALE GENOMIC DNA]</scope>
    <source>
        <strain>TAC 125</strain>
    </source>
</reference>
<dbReference type="EC" id="6.3.2.-" evidence="1"/>
<dbReference type="EMBL" id="CR954246">
    <property type="protein sequence ID" value="CAI87625.1"/>
    <property type="molecule type" value="Genomic_DNA"/>
</dbReference>
<dbReference type="SMR" id="Q3IG57"/>
<dbReference type="STRING" id="326442.PSHAa2577"/>
<dbReference type="KEGG" id="pha:PSHAa2577"/>
<dbReference type="PATRIC" id="fig|326442.8.peg.2487"/>
<dbReference type="eggNOG" id="COG0189">
    <property type="taxonomic scope" value="Bacteria"/>
</dbReference>
<dbReference type="HOGENOM" id="CLU_054353_0_1_6"/>
<dbReference type="BioCyc" id="PHAL326442:PSHA_RS12690-MONOMER"/>
<dbReference type="Proteomes" id="UP000006843">
    <property type="component" value="Chromosome I"/>
</dbReference>
<dbReference type="GO" id="GO:0005737">
    <property type="term" value="C:cytoplasm"/>
    <property type="evidence" value="ECO:0007669"/>
    <property type="project" value="TreeGrafter"/>
</dbReference>
<dbReference type="GO" id="GO:0005524">
    <property type="term" value="F:ATP binding"/>
    <property type="evidence" value="ECO:0007669"/>
    <property type="project" value="UniProtKB-UniRule"/>
</dbReference>
<dbReference type="GO" id="GO:0046872">
    <property type="term" value="F:metal ion binding"/>
    <property type="evidence" value="ECO:0007669"/>
    <property type="project" value="UniProtKB-KW"/>
</dbReference>
<dbReference type="GO" id="GO:0018169">
    <property type="term" value="F:ribosomal S6-glutamic acid ligase activity"/>
    <property type="evidence" value="ECO:0007669"/>
    <property type="project" value="TreeGrafter"/>
</dbReference>
<dbReference type="GO" id="GO:0036211">
    <property type="term" value="P:protein modification process"/>
    <property type="evidence" value="ECO:0007669"/>
    <property type="project" value="InterPro"/>
</dbReference>
<dbReference type="GO" id="GO:0009432">
    <property type="term" value="P:SOS response"/>
    <property type="evidence" value="ECO:0007669"/>
    <property type="project" value="TreeGrafter"/>
</dbReference>
<dbReference type="GO" id="GO:0006412">
    <property type="term" value="P:translation"/>
    <property type="evidence" value="ECO:0007669"/>
    <property type="project" value="UniProtKB-KW"/>
</dbReference>
<dbReference type="FunFam" id="3.40.50.20:FF:000004">
    <property type="entry name" value="Probable alpha-L-glutamate ligase"/>
    <property type="match status" value="1"/>
</dbReference>
<dbReference type="FunFam" id="3.30.1490.20:FF:000005">
    <property type="entry name" value="Probable alpha-L-glutamate ligase 1"/>
    <property type="match status" value="1"/>
</dbReference>
<dbReference type="FunFam" id="3.30.470.20:FF:000016">
    <property type="entry name" value="Ribosomal protein S6--L-glutamate ligase"/>
    <property type="match status" value="1"/>
</dbReference>
<dbReference type="Gene3D" id="3.40.50.20">
    <property type="match status" value="1"/>
</dbReference>
<dbReference type="Gene3D" id="3.30.1490.20">
    <property type="entry name" value="ATP-grasp fold, A domain"/>
    <property type="match status" value="1"/>
</dbReference>
<dbReference type="Gene3D" id="3.30.470.20">
    <property type="entry name" value="ATP-grasp fold, B domain"/>
    <property type="match status" value="1"/>
</dbReference>
<dbReference type="HAMAP" id="MF_01552">
    <property type="entry name" value="RimK"/>
    <property type="match status" value="1"/>
</dbReference>
<dbReference type="InterPro" id="IPR011761">
    <property type="entry name" value="ATP-grasp"/>
</dbReference>
<dbReference type="InterPro" id="IPR013651">
    <property type="entry name" value="ATP-grasp_RimK-type"/>
</dbReference>
<dbReference type="InterPro" id="IPR013815">
    <property type="entry name" value="ATP_grasp_subdomain_1"/>
</dbReference>
<dbReference type="InterPro" id="IPR023533">
    <property type="entry name" value="RimK"/>
</dbReference>
<dbReference type="InterPro" id="IPR041107">
    <property type="entry name" value="Rimk_N"/>
</dbReference>
<dbReference type="InterPro" id="IPR004666">
    <property type="entry name" value="Rp_bS6_RimK/Lys_biosynth_LsyX"/>
</dbReference>
<dbReference type="NCBIfam" id="NF007764">
    <property type="entry name" value="PRK10446.1"/>
    <property type="match status" value="1"/>
</dbReference>
<dbReference type="NCBIfam" id="TIGR00768">
    <property type="entry name" value="rimK_fam"/>
    <property type="match status" value="1"/>
</dbReference>
<dbReference type="PANTHER" id="PTHR21621:SF7">
    <property type="entry name" value="RIBOSOMAL PROTEIN BS6--L-GLUTAMATE LIGASE"/>
    <property type="match status" value="1"/>
</dbReference>
<dbReference type="PANTHER" id="PTHR21621">
    <property type="entry name" value="RIBOSOMAL PROTEIN S6 MODIFICATION PROTEIN"/>
    <property type="match status" value="1"/>
</dbReference>
<dbReference type="Pfam" id="PF08443">
    <property type="entry name" value="RimK"/>
    <property type="match status" value="1"/>
</dbReference>
<dbReference type="Pfam" id="PF18030">
    <property type="entry name" value="Rimk_N"/>
    <property type="match status" value="1"/>
</dbReference>
<dbReference type="SUPFAM" id="SSF56059">
    <property type="entry name" value="Glutathione synthetase ATP-binding domain-like"/>
    <property type="match status" value="1"/>
</dbReference>
<dbReference type="PROSITE" id="PS50975">
    <property type="entry name" value="ATP_GRASP"/>
    <property type="match status" value="1"/>
</dbReference>
<comment type="cofactor">
    <cofactor evidence="1">
        <name>Mg(2+)</name>
        <dbReference type="ChEBI" id="CHEBI:18420"/>
    </cofactor>
    <cofactor evidence="1">
        <name>Mn(2+)</name>
        <dbReference type="ChEBI" id="CHEBI:29035"/>
    </cofactor>
    <text evidence="1">Binds 2 magnesium or manganese ions per subunit.</text>
</comment>
<comment type="similarity">
    <text evidence="1">Belongs to the RimK family.</text>
</comment>
<gene>
    <name evidence="1" type="primary">rimK</name>
    <name type="ordered locus">PSHAa2577</name>
</gene>
<feature type="chain" id="PRO_0000205470" description="Probable alpha-L-glutamate ligase">
    <location>
        <begin position="1"/>
        <end position="301"/>
    </location>
</feature>
<feature type="domain" description="ATP-grasp" evidence="1">
    <location>
        <begin position="104"/>
        <end position="287"/>
    </location>
</feature>
<feature type="binding site" evidence="1">
    <location>
        <position position="141"/>
    </location>
    <ligand>
        <name>ATP</name>
        <dbReference type="ChEBI" id="CHEBI:30616"/>
    </ligand>
</feature>
<feature type="binding site" evidence="1">
    <location>
        <begin position="178"/>
        <end position="179"/>
    </location>
    <ligand>
        <name>ATP</name>
        <dbReference type="ChEBI" id="CHEBI:30616"/>
    </ligand>
</feature>
<feature type="binding site" evidence="1">
    <location>
        <position position="187"/>
    </location>
    <ligand>
        <name>ATP</name>
        <dbReference type="ChEBI" id="CHEBI:30616"/>
    </ligand>
</feature>
<feature type="binding site" evidence="1">
    <location>
        <begin position="211"/>
        <end position="213"/>
    </location>
    <ligand>
        <name>ATP</name>
        <dbReference type="ChEBI" id="CHEBI:30616"/>
    </ligand>
</feature>
<feature type="binding site" evidence="1">
    <location>
        <position position="248"/>
    </location>
    <ligand>
        <name>Mg(2+)</name>
        <dbReference type="ChEBI" id="CHEBI:18420"/>
        <label>1</label>
    </ligand>
</feature>
<feature type="binding site" evidence="1">
    <location>
        <position position="248"/>
    </location>
    <ligand>
        <name>Mn(2+)</name>
        <dbReference type="ChEBI" id="CHEBI:29035"/>
        <label>1</label>
    </ligand>
</feature>
<feature type="binding site" evidence="1">
    <location>
        <position position="260"/>
    </location>
    <ligand>
        <name>Mg(2+)</name>
        <dbReference type="ChEBI" id="CHEBI:18420"/>
        <label>1</label>
    </ligand>
</feature>
<feature type="binding site" evidence="1">
    <location>
        <position position="260"/>
    </location>
    <ligand>
        <name>Mg(2+)</name>
        <dbReference type="ChEBI" id="CHEBI:18420"/>
        <label>2</label>
    </ligand>
</feature>
<feature type="binding site" evidence="1">
    <location>
        <position position="260"/>
    </location>
    <ligand>
        <name>Mn(2+)</name>
        <dbReference type="ChEBI" id="CHEBI:29035"/>
        <label>1</label>
    </ligand>
</feature>
<feature type="binding site" evidence="1">
    <location>
        <position position="260"/>
    </location>
    <ligand>
        <name>Mn(2+)</name>
        <dbReference type="ChEBI" id="CHEBI:29035"/>
        <label>2</label>
    </ligand>
</feature>
<feature type="binding site" evidence="1">
    <location>
        <position position="262"/>
    </location>
    <ligand>
        <name>Mg(2+)</name>
        <dbReference type="ChEBI" id="CHEBI:18420"/>
        <label>2</label>
    </ligand>
</feature>
<feature type="binding site" evidence="1">
    <location>
        <position position="262"/>
    </location>
    <ligand>
        <name>Mn(2+)</name>
        <dbReference type="ChEBI" id="CHEBI:29035"/>
        <label>2</label>
    </ligand>
</feature>
<organism>
    <name type="scientific">Pseudoalteromonas translucida (strain TAC 125)</name>
    <dbReference type="NCBI Taxonomy" id="326442"/>
    <lineage>
        <taxon>Bacteria</taxon>
        <taxon>Pseudomonadati</taxon>
        <taxon>Pseudomonadota</taxon>
        <taxon>Gammaproteobacteria</taxon>
        <taxon>Alteromonadales</taxon>
        <taxon>Pseudoalteromonadaceae</taxon>
        <taxon>Pseudoalteromonas</taxon>
    </lineage>
</organism>
<sequence>MKIGILSRNKKLYSTRRLIEAAEARGHEVKVVDALRCYMNINSELPEIHYRGENLKGFDAVIPRIGASVTFYGCSVLRQFEMMGVYPVNESVAISRSRDKLRSLQLLSRKGVGMPVTGFASKPDDVKDLLEMVGGAPVVIKLLEGTQGIGVVLAETRKAAESVIEAFMGLKANIMVQEYIKEAGGADIRCFVLGDKVIAAMKRQAQEGEFRSNLHRGGSATLVRITPEERKTAVAAAKAMGLNVAGVDLLRSSRGPLVMEVNSSPGLEGIEIATGKDIAGMVIDFIEKTASSKGTATRGKG</sequence>